<name>Y514_YERPA</name>
<feature type="chain" id="PRO_0000289324" description="UPF0325 protein YPA_0514">
    <location>
        <begin position="1"/>
        <end position="129"/>
    </location>
</feature>
<gene>
    <name type="ordered locus">YPA_0514</name>
</gene>
<sequence>MYDNLKSLGITQPEDVDRYSLRQEANNDILKIYFRKDKGEFFAKSVKFKYPRQRKTVVSDNASHGYKEINEINPNLRYVIDELDQLCKRDQIEVDLKRKILDDLRHLESVVTNKIAEIEADLEKLTNGR</sequence>
<comment type="similarity">
    <text evidence="1">Belongs to the UPF0325 family.</text>
</comment>
<organism>
    <name type="scientific">Yersinia pestis bv. Antiqua (strain Antiqua)</name>
    <dbReference type="NCBI Taxonomy" id="360102"/>
    <lineage>
        <taxon>Bacteria</taxon>
        <taxon>Pseudomonadati</taxon>
        <taxon>Pseudomonadota</taxon>
        <taxon>Gammaproteobacteria</taxon>
        <taxon>Enterobacterales</taxon>
        <taxon>Yersiniaceae</taxon>
        <taxon>Yersinia</taxon>
    </lineage>
</organism>
<evidence type="ECO:0000255" key="1">
    <source>
        <dbReference type="HAMAP-Rule" id="MF_01519"/>
    </source>
</evidence>
<dbReference type="EMBL" id="CP000308">
    <property type="protein sequence ID" value="ABG12482.1"/>
    <property type="molecule type" value="Genomic_DNA"/>
</dbReference>
<dbReference type="RefSeq" id="WP_002212127.1">
    <property type="nucleotide sequence ID" value="NZ_CP009906.1"/>
</dbReference>
<dbReference type="SMR" id="Q1CAP0"/>
<dbReference type="KEGG" id="ypa:YPA_0514"/>
<dbReference type="Proteomes" id="UP000001971">
    <property type="component" value="Chromosome"/>
</dbReference>
<dbReference type="HAMAP" id="MF_01519">
    <property type="entry name" value="UPF0325"/>
    <property type="match status" value="1"/>
</dbReference>
<dbReference type="InterPro" id="IPR020911">
    <property type="entry name" value="UPF0325"/>
</dbReference>
<dbReference type="NCBIfam" id="NF010213">
    <property type="entry name" value="PRK13677.1"/>
    <property type="match status" value="1"/>
</dbReference>
<dbReference type="Pfam" id="PF11944">
    <property type="entry name" value="DUF3461"/>
    <property type="match status" value="1"/>
</dbReference>
<proteinExistence type="inferred from homology"/>
<protein>
    <recommendedName>
        <fullName evidence="1">UPF0325 protein YPA_0514</fullName>
    </recommendedName>
</protein>
<reference key="1">
    <citation type="journal article" date="2006" name="J. Bacteriol.">
        <title>Complete genome sequence of Yersinia pestis strains Antiqua and Nepal516: evidence of gene reduction in an emerging pathogen.</title>
        <authorList>
            <person name="Chain P.S.G."/>
            <person name="Hu P."/>
            <person name="Malfatti S.A."/>
            <person name="Radnedge L."/>
            <person name="Larimer F."/>
            <person name="Vergez L.M."/>
            <person name="Worsham P."/>
            <person name="Chu M.C."/>
            <person name="Andersen G.L."/>
        </authorList>
    </citation>
    <scope>NUCLEOTIDE SEQUENCE [LARGE SCALE GENOMIC DNA]</scope>
    <source>
        <strain>Antiqua</strain>
    </source>
</reference>
<accession>Q1CAP0</accession>